<dbReference type="EC" id="2.3.2.27" evidence="8"/>
<dbReference type="EMBL" id="DS499594">
    <property type="protein sequence ID" value="EDP56444.1"/>
    <property type="molecule type" value="Genomic_DNA"/>
</dbReference>
<dbReference type="EnsemblFungi" id="EDP56444">
    <property type="protein sequence ID" value="EDP56444"/>
    <property type="gene ID" value="AFUB_011550"/>
</dbReference>
<dbReference type="VEuPathDB" id="FungiDB:AFUB_011550"/>
<dbReference type="HOGENOM" id="CLU_010475_0_0_1"/>
<dbReference type="OrthoDB" id="58948at5052"/>
<dbReference type="PhylomeDB" id="B0XQY0"/>
<dbReference type="UniPathway" id="UPA00143"/>
<dbReference type="Proteomes" id="UP000001699">
    <property type="component" value="Unassembled WGS sequence"/>
</dbReference>
<dbReference type="GO" id="GO:0044695">
    <property type="term" value="C:Dsc E3 ubiquitin ligase complex"/>
    <property type="evidence" value="ECO:0007669"/>
    <property type="project" value="TreeGrafter"/>
</dbReference>
<dbReference type="GO" id="GO:0005789">
    <property type="term" value="C:endoplasmic reticulum membrane"/>
    <property type="evidence" value="ECO:0007669"/>
    <property type="project" value="UniProtKB-SubCell"/>
</dbReference>
<dbReference type="GO" id="GO:0061630">
    <property type="term" value="F:ubiquitin protein ligase activity"/>
    <property type="evidence" value="ECO:0007669"/>
    <property type="project" value="TreeGrafter"/>
</dbReference>
<dbReference type="GO" id="GO:0008270">
    <property type="term" value="F:zinc ion binding"/>
    <property type="evidence" value="ECO:0007669"/>
    <property type="project" value="UniProtKB-KW"/>
</dbReference>
<dbReference type="GO" id="GO:0043161">
    <property type="term" value="P:proteasome-mediated ubiquitin-dependent protein catabolic process"/>
    <property type="evidence" value="ECO:0007669"/>
    <property type="project" value="TreeGrafter"/>
</dbReference>
<dbReference type="GO" id="GO:0016567">
    <property type="term" value="P:protein ubiquitination"/>
    <property type="evidence" value="ECO:0007669"/>
    <property type="project" value="UniProtKB-UniPathway"/>
</dbReference>
<dbReference type="FunFam" id="3.30.40.10:FF:000626">
    <property type="entry name" value="Transmembrane ubiquitin ligase 1"/>
    <property type="match status" value="1"/>
</dbReference>
<dbReference type="Gene3D" id="3.30.40.10">
    <property type="entry name" value="Zinc/RING finger domain, C3HC4 (zinc finger)"/>
    <property type="match status" value="1"/>
</dbReference>
<dbReference type="InterPro" id="IPR021319">
    <property type="entry name" value="DUF2921"/>
</dbReference>
<dbReference type="InterPro" id="IPR050731">
    <property type="entry name" value="HRD1_E3_ubiq-ligases"/>
</dbReference>
<dbReference type="InterPro" id="IPR001841">
    <property type="entry name" value="Znf_RING"/>
</dbReference>
<dbReference type="InterPro" id="IPR013083">
    <property type="entry name" value="Znf_RING/FYVE/PHD"/>
</dbReference>
<dbReference type="PANTHER" id="PTHR22763">
    <property type="entry name" value="RING ZINC FINGER PROTEIN"/>
    <property type="match status" value="1"/>
</dbReference>
<dbReference type="PANTHER" id="PTHR22763:SF162">
    <property type="entry name" value="TRANSMEMBRANE E3 UBIQUITIN-PROTEIN LIGASE 1"/>
    <property type="match status" value="1"/>
</dbReference>
<dbReference type="Pfam" id="PF11145">
    <property type="entry name" value="DUF2921"/>
    <property type="match status" value="2"/>
</dbReference>
<dbReference type="Pfam" id="PF13639">
    <property type="entry name" value="zf-RING_2"/>
    <property type="match status" value="1"/>
</dbReference>
<dbReference type="SMART" id="SM00184">
    <property type="entry name" value="RING"/>
    <property type="match status" value="1"/>
</dbReference>
<dbReference type="SUPFAM" id="SSF57850">
    <property type="entry name" value="RING/U-box"/>
    <property type="match status" value="1"/>
</dbReference>
<dbReference type="PROSITE" id="PS50089">
    <property type="entry name" value="ZF_RING_2"/>
    <property type="match status" value="1"/>
</dbReference>
<reference key="1">
    <citation type="journal article" date="2008" name="PLoS Genet.">
        <title>Genomic islands in the pathogenic filamentous fungus Aspergillus fumigatus.</title>
        <authorList>
            <person name="Fedorova N.D."/>
            <person name="Khaldi N."/>
            <person name="Joardar V.S."/>
            <person name="Maiti R."/>
            <person name="Amedeo P."/>
            <person name="Anderson M.J."/>
            <person name="Crabtree J."/>
            <person name="Silva J.C."/>
            <person name="Badger J.H."/>
            <person name="Albarraq A."/>
            <person name="Angiuoli S."/>
            <person name="Bussey H."/>
            <person name="Bowyer P."/>
            <person name="Cotty P.J."/>
            <person name="Dyer P.S."/>
            <person name="Egan A."/>
            <person name="Galens K."/>
            <person name="Fraser-Liggett C.M."/>
            <person name="Haas B.J."/>
            <person name="Inman J.M."/>
            <person name="Kent R."/>
            <person name="Lemieux S."/>
            <person name="Malavazi I."/>
            <person name="Orvis J."/>
            <person name="Roemer T."/>
            <person name="Ronning C.M."/>
            <person name="Sundaram J.P."/>
            <person name="Sutton G."/>
            <person name="Turner G."/>
            <person name="Venter J.C."/>
            <person name="White O.R."/>
            <person name="Whitty B.R."/>
            <person name="Youngman P."/>
            <person name="Wolfe K.H."/>
            <person name="Goldman G.H."/>
            <person name="Wortman J.R."/>
            <person name="Jiang B."/>
            <person name="Denning D.W."/>
            <person name="Nierman W.C."/>
        </authorList>
    </citation>
    <scope>NUCLEOTIDE SEQUENCE [LARGE SCALE GENOMIC DNA]</scope>
    <source>
        <strain>CBS 144.89 / FGSC A1163 / CEA10</strain>
    </source>
</reference>
<reference key="2">
    <citation type="journal article" date="2012" name="Eukaryot. Cell">
        <title>Dsc orthologs are required for hypoxia adaptation, triazole drug responses, and fungal virulence in Aspergillus fumigatus.</title>
        <authorList>
            <person name="Willger S.D."/>
            <person name="Cornish E.J."/>
            <person name="Chung D."/>
            <person name="Fleming B.A."/>
            <person name="Lehmann M.M."/>
            <person name="Puttikamonkul S."/>
            <person name="Cramer R.A."/>
        </authorList>
    </citation>
    <scope>FUNCTION</scope>
    <scope>DISRUPTION PHENOTYPE</scope>
</reference>
<accession>B0XQY0</accession>
<name>DSCA_ASPFC</name>
<proteinExistence type="inferred from homology"/>
<organism>
    <name type="scientific">Aspergillus fumigatus (strain CBS 144.89 / FGSC A1163 / CEA10)</name>
    <name type="common">Neosartorya fumigata</name>
    <dbReference type="NCBI Taxonomy" id="451804"/>
    <lineage>
        <taxon>Eukaryota</taxon>
        <taxon>Fungi</taxon>
        <taxon>Dikarya</taxon>
        <taxon>Ascomycota</taxon>
        <taxon>Pezizomycotina</taxon>
        <taxon>Eurotiomycetes</taxon>
        <taxon>Eurotiomycetidae</taxon>
        <taxon>Eurotiales</taxon>
        <taxon>Aspergillaceae</taxon>
        <taxon>Aspergillus</taxon>
        <taxon>Aspergillus subgen. Fumigati</taxon>
    </lineage>
</organism>
<keyword id="KW-0256">Endoplasmic reticulum</keyword>
<keyword id="KW-0325">Glycoprotein</keyword>
<keyword id="KW-0472">Membrane</keyword>
<keyword id="KW-0479">Metal-binding</keyword>
<keyword id="KW-0732">Signal</keyword>
<keyword id="KW-0808">Transferase</keyword>
<keyword id="KW-0812">Transmembrane</keyword>
<keyword id="KW-1133">Transmembrane helix</keyword>
<keyword id="KW-0833">Ubl conjugation pathway</keyword>
<keyword id="KW-0862">Zinc</keyword>
<keyword id="KW-0863">Zinc-finger</keyword>
<evidence type="ECO:0000255" key="1"/>
<evidence type="ECO:0000255" key="2">
    <source>
        <dbReference type="PROSITE-ProRule" id="PRU00175"/>
    </source>
</evidence>
<evidence type="ECO:0000255" key="3">
    <source>
        <dbReference type="PROSITE-ProRule" id="PRU00498"/>
    </source>
</evidence>
<evidence type="ECO:0000256" key="4">
    <source>
        <dbReference type="SAM" id="MobiDB-lite"/>
    </source>
</evidence>
<evidence type="ECO:0000269" key="5">
    <source>
    </source>
</evidence>
<evidence type="ECO:0000303" key="6">
    <source>
    </source>
</evidence>
<evidence type="ECO:0000305" key="7"/>
<evidence type="ECO:0000305" key="8">
    <source>
    </source>
</evidence>
<feature type="signal peptide" evidence="1">
    <location>
        <begin position="1"/>
        <end position="22"/>
    </location>
</feature>
<feature type="chain" id="PRO_5002760536" description="DSC E3 ubiquitin ligase complex subunit A">
    <location>
        <begin position="23"/>
        <end position="802"/>
    </location>
</feature>
<feature type="topological domain" description="Lumenal" evidence="7">
    <location>
        <begin position="23"/>
        <end position="381"/>
    </location>
</feature>
<feature type="transmembrane region" description="Helical" evidence="1">
    <location>
        <begin position="382"/>
        <end position="402"/>
    </location>
</feature>
<feature type="topological domain" description="Cytoplasmic" evidence="7">
    <location>
        <begin position="403"/>
        <end position="429"/>
    </location>
</feature>
<feature type="transmembrane region" description="Helical" evidence="1">
    <location>
        <begin position="430"/>
        <end position="450"/>
    </location>
</feature>
<feature type="topological domain" description="Lumenal" evidence="7">
    <location>
        <begin position="451"/>
        <end position="453"/>
    </location>
</feature>
<feature type="transmembrane region" description="Helical" evidence="1">
    <location>
        <begin position="454"/>
        <end position="474"/>
    </location>
</feature>
<feature type="topological domain" description="Cytoplasmic" evidence="7">
    <location>
        <begin position="475"/>
        <end position="550"/>
    </location>
</feature>
<feature type="transmembrane region" description="Helical" evidence="1">
    <location>
        <begin position="551"/>
        <end position="571"/>
    </location>
</feature>
<feature type="topological domain" description="Lumenal" evidence="7">
    <location>
        <begin position="572"/>
        <end position="574"/>
    </location>
</feature>
<feature type="transmembrane region" description="Helical" evidence="1">
    <location>
        <begin position="575"/>
        <end position="595"/>
    </location>
</feature>
<feature type="topological domain" description="Cytoplasmic" evidence="7">
    <location>
        <begin position="596"/>
        <end position="608"/>
    </location>
</feature>
<feature type="transmembrane region" description="Helical" evidence="1">
    <location>
        <begin position="609"/>
        <end position="629"/>
    </location>
</feature>
<feature type="topological domain" description="Lumenal" evidence="7">
    <location>
        <begin position="630"/>
        <end position="642"/>
    </location>
</feature>
<feature type="transmembrane region" description="Helical" evidence="1">
    <location>
        <begin position="643"/>
        <end position="663"/>
    </location>
</feature>
<feature type="topological domain" description="Cytoplasmic" evidence="7">
    <location>
        <begin position="664"/>
        <end position="802"/>
    </location>
</feature>
<feature type="zinc finger region" description="RING-type; atypical" evidence="2">
    <location>
        <begin position="732"/>
        <end position="796"/>
    </location>
</feature>
<feature type="region of interest" description="Disordered" evidence="4">
    <location>
        <begin position="478"/>
        <end position="541"/>
    </location>
</feature>
<feature type="compositionally biased region" description="Polar residues" evidence="4">
    <location>
        <begin position="532"/>
        <end position="541"/>
    </location>
</feature>
<feature type="glycosylation site" description="N-linked (GlcNAc...) asparagine" evidence="3">
    <location>
        <position position="48"/>
    </location>
</feature>
<feature type="glycosylation site" description="N-linked (GlcNAc...) asparagine" evidence="3">
    <location>
        <position position="71"/>
    </location>
</feature>
<feature type="glycosylation site" description="N-linked (GlcNAc...) asparagine" evidence="3">
    <location>
        <position position="115"/>
    </location>
</feature>
<feature type="glycosylation site" description="N-linked (GlcNAc...) asparagine" evidence="3">
    <location>
        <position position="126"/>
    </location>
</feature>
<feature type="glycosylation site" description="N-linked (GlcNAc...) asparagine" evidence="3">
    <location>
        <position position="148"/>
    </location>
</feature>
<feature type="glycosylation site" description="N-linked (GlcNAc...) asparagine" evidence="3">
    <location>
        <position position="166"/>
    </location>
</feature>
<gene>
    <name evidence="6" type="primary">dscA</name>
    <name type="ORF">AFUB_011550</name>
</gene>
<protein>
    <recommendedName>
        <fullName evidence="6">DSC E3 ubiquitin ligase complex subunit A</fullName>
        <ecNumber evidence="8">2.3.2.27</ecNumber>
    </recommendedName>
    <alternativeName>
        <fullName>Defective for SREBP cleavage protein A</fullName>
    </alternativeName>
    <alternativeName>
        <fullName evidence="6">RING-type E3 ubiquitin transferase dscA</fullName>
    </alternativeName>
</protein>
<comment type="function">
    <text evidence="5">Catalytic component of the DSC E3 ubiquitin ligase complex which is required for the srbA transcriptional activator proteolytic cleavage to release the soluble transcription factor from the membrane in low oxygen or sterol conditions (PubMed:23104569). Required for growth during hypoxia and triazole drug susceptibility, as well as for virulence in a murine model of invasive pulmonary aspergillosis (IPA) (PubMed:23104569).</text>
</comment>
<comment type="catalytic activity">
    <reaction evidence="8">
        <text>S-ubiquitinyl-[E2 ubiquitin-conjugating enzyme]-L-cysteine + [acceptor protein]-L-lysine = [E2 ubiquitin-conjugating enzyme]-L-cysteine + N(6)-ubiquitinyl-[acceptor protein]-L-lysine.</text>
        <dbReference type="EC" id="2.3.2.27"/>
    </reaction>
</comment>
<comment type="pathway">
    <text evidence="8">Protein modification; protein ubiquitination.</text>
</comment>
<comment type="subunit">
    <text evidence="8">Component of the DSC E3 ubiquitin ligase complex composed of dscA, dscB, dscC and dscD.</text>
</comment>
<comment type="subcellular location">
    <subcellularLocation>
        <location evidence="8">Endoplasmic reticulum membrane</location>
        <topology evidence="1">Multi-pass membrane protein</topology>
    </subcellularLocation>
</comment>
<comment type="disruption phenotype">
    <text evidence="5">Impairs growth on solid media under hypoxia and leads to triazole susceptibility (PubMed:23104569). Impairs virulence in a murine model of invasive pulmonary aspergillosis (IPA) (PubMed:23104569).</text>
</comment>
<sequence>MDNRGSFFFLLIVFYLLLSSQSRPPLLDQDRERQREVARERDALRLLNESKYGDFDPPGDKWLPFAGTRKNDSYAWGILPEAQGRARHQLRSAISNAGLEPPRSLEDPDALPSLNLTQLLLPVYRNATGKLRGDWVRRKLNKEYPKLNTTAIALEHGYFTHEFGLNITGSSGTFYLDLREGGGEELRVDSGQVREIRATLAVESNDFWGNTWYISLFGVHFPETGAIILSSNSEKFEGLFVLPHLAFSSDAYELSHQLLLNSLSDTLSEKENRPPTLFPWSSLIGSEQVEFPAPKCEHIIYLQQHPVTIHDYLADKPVVDQIEEELRFPIGAPVPPAPLMVMSAVVFSPDCGYILETKGTPDFPPSEGLYLTGPKIEEYDKYSARLVFIICGVFAAQITLLLRQIKEASTPSTRSRISFYTIALMAFGDAFVLIFILLELYPAVSFLVMATAAFLTFLSVSYIGMKFMMEIWAVQAPERREQERRSNPPASTPRSTGLPLPATSAPVRDSGATPIILTPDQDPPAEEDDQPTNRGTTSAAQETRNDVGAMYARFYFVLFVMLIISIWSFLWPNRLGALYARALAFVYLSFWTPQIGRNIIRNCRKALRWDFVIGQSILRLFPFVYFLTVRGNVLFIHPDTTTAFALAGWVWIQVWVLASQDILGPRFFVPRGWAPAAYDYHPILRDGDESEADLESGGVLPIGALRAEDLSGDAKDEDKQRTKDRKRAVFDCAICMQEIEVPVLAARGSAGGSSVTEGATSILSRRTYMVTPCRHIFHSTCLESWMRLRLQCPICRESIPPV</sequence>